<organism>
    <name type="scientific">Salmonella choleraesuis (strain SC-B67)</name>
    <dbReference type="NCBI Taxonomy" id="321314"/>
    <lineage>
        <taxon>Bacteria</taxon>
        <taxon>Pseudomonadati</taxon>
        <taxon>Pseudomonadota</taxon>
        <taxon>Gammaproteobacteria</taxon>
        <taxon>Enterobacterales</taxon>
        <taxon>Enterobacteriaceae</taxon>
        <taxon>Salmonella</taxon>
    </lineage>
</organism>
<sequence length="88" mass="10182">MALLDFFLSRKKSTANIAKERLQIIVAERRRSDAEPHYLPQLRKDILEVICKYVQIDPEMVTVQLEQKDGDISILELNVTLPEAEESK</sequence>
<reference key="1">
    <citation type="journal article" date="2005" name="Nucleic Acids Res.">
        <title>The genome sequence of Salmonella enterica serovar Choleraesuis, a highly invasive and resistant zoonotic pathogen.</title>
        <authorList>
            <person name="Chiu C.-H."/>
            <person name="Tang P."/>
            <person name="Chu C."/>
            <person name="Hu S."/>
            <person name="Bao Q."/>
            <person name="Yu J."/>
            <person name="Chou Y.-Y."/>
            <person name="Wang H.-S."/>
            <person name="Lee Y.-S."/>
        </authorList>
    </citation>
    <scope>NUCLEOTIDE SEQUENCE [LARGE SCALE GENOMIC DNA]</scope>
    <source>
        <strain>SC-B67</strain>
    </source>
</reference>
<comment type="function">
    <text evidence="1">Prevents the cell division inhibition by proteins MinC and MinD at internal division sites while permitting inhibition at polar sites. This ensures cell division at the proper site by restricting the formation of a division septum at the midpoint of the long axis of the cell.</text>
</comment>
<comment type="similarity">
    <text evidence="1">Belongs to the MinE family.</text>
</comment>
<feature type="chain" id="PRO_0000298178" description="Cell division topological specificity factor">
    <location>
        <begin position="1"/>
        <end position="88"/>
    </location>
</feature>
<gene>
    <name evidence="1" type="primary">minE</name>
    <name type="ordered locus">SCH_1809</name>
</gene>
<protein>
    <recommendedName>
        <fullName evidence="1">Cell division topological specificity factor</fullName>
    </recommendedName>
</protein>
<name>MINE_SALCH</name>
<proteinExistence type="inferred from homology"/>
<evidence type="ECO:0000255" key="1">
    <source>
        <dbReference type="HAMAP-Rule" id="MF_00262"/>
    </source>
</evidence>
<keyword id="KW-0131">Cell cycle</keyword>
<keyword id="KW-0132">Cell division</keyword>
<dbReference type="EMBL" id="AE017220">
    <property type="protein sequence ID" value="AAX65715.1"/>
    <property type="molecule type" value="Genomic_DNA"/>
</dbReference>
<dbReference type="RefSeq" id="WP_001185666.1">
    <property type="nucleotide sequence ID" value="NC_006905.1"/>
</dbReference>
<dbReference type="SMR" id="Q57NJ6"/>
<dbReference type="GeneID" id="92972923"/>
<dbReference type="KEGG" id="sec:SCH_1809"/>
<dbReference type="HOGENOM" id="CLU_137929_2_2_6"/>
<dbReference type="Proteomes" id="UP000000538">
    <property type="component" value="Chromosome"/>
</dbReference>
<dbReference type="GO" id="GO:0051301">
    <property type="term" value="P:cell division"/>
    <property type="evidence" value="ECO:0007669"/>
    <property type="project" value="UniProtKB-KW"/>
</dbReference>
<dbReference type="GO" id="GO:0032955">
    <property type="term" value="P:regulation of division septum assembly"/>
    <property type="evidence" value="ECO:0007669"/>
    <property type="project" value="InterPro"/>
</dbReference>
<dbReference type="FunFam" id="3.30.1070.10:FF:000001">
    <property type="entry name" value="Cell division topological specificity factor"/>
    <property type="match status" value="1"/>
</dbReference>
<dbReference type="Gene3D" id="3.30.1070.10">
    <property type="entry name" value="Cell division topological specificity factor MinE"/>
    <property type="match status" value="1"/>
</dbReference>
<dbReference type="HAMAP" id="MF_00262">
    <property type="entry name" value="MinE"/>
    <property type="match status" value="1"/>
</dbReference>
<dbReference type="InterPro" id="IPR005527">
    <property type="entry name" value="MinE"/>
</dbReference>
<dbReference type="InterPro" id="IPR036707">
    <property type="entry name" value="MinE_sf"/>
</dbReference>
<dbReference type="NCBIfam" id="TIGR01215">
    <property type="entry name" value="minE"/>
    <property type="match status" value="1"/>
</dbReference>
<dbReference type="NCBIfam" id="NF001422">
    <property type="entry name" value="PRK00296.1"/>
    <property type="match status" value="1"/>
</dbReference>
<dbReference type="Pfam" id="PF03776">
    <property type="entry name" value="MinE"/>
    <property type="match status" value="1"/>
</dbReference>
<dbReference type="SUPFAM" id="SSF55229">
    <property type="entry name" value="Cell division protein MinE topological specificity domain"/>
    <property type="match status" value="1"/>
</dbReference>
<accession>Q57NJ6</accession>